<keyword id="KW-0997">Cell inner membrane</keyword>
<keyword id="KW-1003">Cell membrane</keyword>
<keyword id="KW-0445">Lipid transport</keyword>
<keyword id="KW-0472">Membrane</keyword>
<keyword id="KW-0812">Transmembrane</keyword>
<keyword id="KW-1133">Transmembrane helix</keyword>
<keyword id="KW-0813">Transport</keyword>
<protein>
    <recommendedName>
        <fullName evidence="1">Lysophospholipid transporter LplT</fullName>
    </recommendedName>
</protein>
<dbReference type="EMBL" id="BX936398">
    <property type="protein sequence ID" value="CAH22279.1"/>
    <property type="molecule type" value="Genomic_DNA"/>
</dbReference>
<dbReference type="RefSeq" id="WP_002209842.1">
    <property type="nucleotide sequence ID" value="NZ_CP009712.1"/>
</dbReference>
<dbReference type="SMR" id="Q667F2"/>
<dbReference type="GeneID" id="96662409"/>
<dbReference type="KEGG" id="ypo:BZ17_3576"/>
<dbReference type="KEGG" id="yps:YPTB3041"/>
<dbReference type="PATRIC" id="fig|273123.14.peg.3759"/>
<dbReference type="Proteomes" id="UP000001011">
    <property type="component" value="Chromosome"/>
</dbReference>
<dbReference type="GO" id="GO:0005886">
    <property type="term" value="C:plasma membrane"/>
    <property type="evidence" value="ECO:0007669"/>
    <property type="project" value="UniProtKB-SubCell"/>
</dbReference>
<dbReference type="GO" id="GO:0051978">
    <property type="term" value="F:lysophospholipid:sodium symporter activity"/>
    <property type="evidence" value="ECO:0007669"/>
    <property type="project" value="InterPro"/>
</dbReference>
<dbReference type="CDD" id="cd06173">
    <property type="entry name" value="MFS_MefA_like"/>
    <property type="match status" value="1"/>
</dbReference>
<dbReference type="Gene3D" id="1.20.1250.20">
    <property type="entry name" value="MFS general substrate transporter like domains"/>
    <property type="match status" value="1"/>
</dbReference>
<dbReference type="HAMAP" id="MF_01585">
    <property type="entry name" value="MFS_LplT"/>
    <property type="match status" value="1"/>
</dbReference>
<dbReference type="InterPro" id="IPR023727">
    <property type="entry name" value="LysoPLipid__transptr_LplT"/>
</dbReference>
<dbReference type="InterPro" id="IPR011701">
    <property type="entry name" value="MFS"/>
</dbReference>
<dbReference type="InterPro" id="IPR036259">
    <property type="entry name" value="MFS_trans_sf"/>
</dbReference>
<dbReference type="NCBIfam" id="NF008397">
    <property type="entry name" value="PRK11195.1"/>
    <property type="match status" value="1"/>
</dbReference>
<dbReference type="PANTHER" id="PTHR43266">
    <property type="entry name" value="MACROLIDE-EFFLUX PROTEIN"/>
    <property type="match status" value="1"/>
</dbReference>
<dbReference type="PANTHER" id="PTHR43266:SF2">
    <property type="entry name" value="MAJOR FACILITATOR SUPERFAMILY (MFS) PROFILE DOMAIN-CONTAINING PROTEIN"/>
    <property type="match status" value="1"/>
</dbReference>
<dbReference type="Pfam" id="PF07690">
    <property type="entry name" value="MFS_1"/>
    <property type="match status" value="1"/>
</dbReference>
<dbReference type="SUPFAM" id="SSF103473">
    <property type="entry name" value="MFS general substrate transporter"/>
    <property type="match status" value="1"/>
</dbReference>
<accession>Q667F2</accession>
<evidence type="ECO:0000255" key="1">
    <source>
        <dbReference type="HAMAP-Rule" id="MF_01585"/>
    </source>
</evidence>
<reference key="1">
    <citation type="journal article" date="2004" name="Proc. Natl. Acad. Sci. U.S.A.">
        <title>Insights into the evolution of Yersinia pestis through whole-genome comparison with Yersinia pseudotuberculosis.</title>
        <authorList>
            <person name="Chain P.S.G."/>
            <person name="Carniel E."/>
            <person name="Larimer F.W."/>
            <person name="Lamerdin J."/>
            <person name="Stoutland P.O."/>
            <person name="Regala W.M."/>
            <person name="Georgescu A.M."/>
            <person name="Vergez L.M."/>
            <person name="Land M.L."/>
            <person name="Motin V.L."/>
            <person name="Brubaker R.R."/>
            <person name="Fowler J."/>
            <person name="Hinnebusch J."/>
            <person name="Marceau M."/>
            <person name="Medigue C."/>
            <person name="Simonet M."/>
            <person name="Chenal-Francisque V."/>
            <person name="Souza B."/>
            <person name="Dacheux D."/>
            <person name="Elliott J.M."/>
            <person name="Derbise A."/>
            <person name="Hauser L.J."/>
            <person name="Garcia E."/>
        </authorList>
    </citation>
    <scope>NUCLEOTIDE SEQUENCE [LARGE SCALE GENOMIC DNA]</scope>
    <source>
        <strain>IP32953</strain>
    </source>
</reference>
<feature type="chain" id="PRO_0000309844" description="Lysophospholipid transporter LplT">
    <location>
        <begin position="1"/>
        <end position="406"/>
    </location>
</feature>
<feature type="transmembrane region" description="Helical" evidence="1">
    <location>
        <begin position="16"/>
        <end position="36"/>
    </location>
</feature>
<feature type="transmembrane region" description="Helical" evidence="1">
    <location>
        <begin position="53"/>
        <end position="73"/>
    </location>
</feature>
<feature type="transmembrane region" description="Helical" evidence="1">
    <location>
        <begin position="91"/>
        <end position="111"/>
    </location>
</feature>
<feature type="transmembrane region" description="Helical" evidence="1">
    <location>
        <begin position="139"/>
        <end position="159"/>
    </location>
</feature>
<feature type="transmembrane region" description="Helical" evidence="1">
    <location>
        <begin position="164"/>
        <end position="184"/>
    </location>
</feature>
<feature type="transmembrane region" description="Helical" evidence="1">
    <location>
        <begin position="227"/>
        <end position="247"/>
    </location>
</feature>
<feature type="transmembrane region" description="Helical" evidence="1">
    <location>
        <begin position="253"/>
        <end position="273"/>
    </location>
</feature>
<feature type="transmembrane region" description="Helical" evidence="1">
    <location>
        <begin position="285"/>
        <end position="305"/>
    </location>
</feature>
<feature type="transmembrane region" description="Helical" evidence="1">
    <location>
        <begin position="310"/>
        <end position="330"/>
    </location>
</feature>
<feature type="transmembrane region" description="Helical" evidence="1">
    <location>
        <begin position="349"/>
        <end position="369"/>
    </location>
</feature>
<feature type="transmembrane region" description="Helical" evidence="1">
    <location>
        <begin position="372"/>
        <end position="392"/>
    </location>
</feature>
<comment type="function">
    <text evidence="1">Catalyzes the facilitated diffusion of 2-acyl-glycero-3-phosphoethanolamine (2-acyl-GPE) into the cell.</text>
</comment>
<comment type="subcellular location">
    <subcellularLocation>
        <location evidence="1">Cell inner membrane</location>
        <topology evidence="1">Multi-pass membrane protein</topology>
    </subcellularLocation>
</comment>
<comment type="similarity">
    <text evidence="1">Belongs to the major facilitator superfamily. LplT (TC 2.A.1.42) family.</text>
</comment>
<gene>
    <name evidence="1" type="primary">lplT</name>
    <name type="ordered locus">YPTB3041</name>
</gene>
<name>LPLT_YERPS</name>
<organism>
    <name type="scientific">Yersinia pseudotuberculosis serotype I (strain IP32953)</name>
    <dbReference type="NCBI Taxonomy" id="273123"/>
    <lineage>
        <taxon>Bacteria</taxon>
        <taxon>Pseudomonadati</taxon>
        <taxon>Pseudomonadota</taxon>
        <taxon>Gammaproteobacteria</taxon>
        <taxon>Enterobacterales</taxon>
        <taxon>Yersiniaceae</taxon>
        <taxon>Yersinia</taxon>
    </lineage>
</organism>
<sequence>MSQDVLADKPLLSRSMVAVLCAQFFSAFGDNALLFATLALIKQQLYPDWSQPILQMAFVATYIVLAPFVGQIADGFAKGRVMMVANGLKLAGALVICFGLNPFLGYSLVGVGAAAYSPAKYGILGEITSGEQLVKANGMMEASTIAAILLGSVAGGILADWHLMAALGVCALVYAIAVIANLFIPRLAAARSGASWRPRAMTGSFFTACRLLWQDSETRFSLAGTSLFWGAGVTLRFLLVLWVPVALGIADNATPTLLNAMVAIGIVVGAGAAARFVTLKTVKRCLPAGVLIGVMVTIFSLQNSMPMAYLLLIIIGILGGFFVVPLNALLQERGKHSVGAGNAIAVQNLGENTAMLFMLGLYSLVVKLGAPVVAVGVGFGVVFALAIALLWGWQWRQQRQKTRQPE</sequence>
<proteinExistence type="inferred from homology"/>